<dbReference type="EC" id="4.1.1.36" evidence="2"/>
<dbReference type="EMBL" id="AK036042">
    <property type="protein sequence ID" value="BAC29285.1"/>
    <property type="molecule type" value="mRNA"/>
</dbReference>
<dbReference type="EMBL" id="BC052928">
    <property type="protein sequence ID" value="AAH52928.1"/>
    <property type="molecule type" value="mRNA"/>
</dbReference>
<dbReference type="EMBL" id="BC089351">
    <property type="protein sequence ID" value="AAH89351.1"/>
    <property type="molecule type" value="mRNA"/>
</dbReference>
<dbReference type="CCDS" id="CCDS23221.1"/>
<dbReference type="RefSeq" id="NP_001344841.1">
    <property type="nucleotide sequence ID" value="NM_001357912.1"/>
</dbReference>
<dbReference type="RefSeq" id="NP_001344842.1">
    <property type="nucleotide sequence ID" value="NM_001357913.1"/>
</dbReference>
<dbReference type="RefSeq" id="NP_789801.1">
    <property type="nucleotide sequence ID" value="NM_176831.5"/>
</dbReference>
<dbReference type="RefSeq" id="XP_006511423.1">
    <property type="nucleotide sequence ID" value="XM_006511360.5"/>
</dbReference>
<dbReference type="RefSeq" id="XP_006511424.1">
    <property type="nucleotide sequence ID" value="XM_006511361.5"/>
</dbReference>
<dbReference type="RefSeq" id="XP_006511425.1">
    <property type="nucleotide sequence ID" value="XM_006511362.3"/>
</dbReference>
<dbReference type="RefSeq" id="XP_006511426.1">
    <property type="nucleotide sequence ID" value="XM_006511363.5"/>
</dbReference>
<dbReference type="RefSeq" id="XP_011241091.1">
    <property type="nucleotide sequence ID" value="XM_011242789.2"/>
</dbReference>
<dbReference type="RefSeq" id="XP_017169007.1">
    <property type="nucleotide sequence ID" value="XM_017313518.1"/>
</dbReference>
<dbReference type="RefSeq" id="XP_030100362.1">
    <property type="nucleotide sequence ID" value="XM_030244502.2"/>
</dbReference>
<dbReference type="RefSeq" id="XP_036011077.1">
    <property type="nucleotide sequence ID" value="XM_036155184.1"/>
</dbReference>
<dbReference type="RefSeq" id="XP_036011078.1">
    <property type="nucleotide sequence ID" value="XM_036155185.1"/>
</dbReference>
<dbReference type="RefSeq" id="XP_036011079.1">
    <property type="nucleotide sequence ID" value="XM_036155186.1"/>
</dbReference>
<dbReference type="RefSeq" id="XP_036011080.1">
    <property type="nucleotide sequence ID" value="XM_036155187.1"/>
</dbReference>
<dbReference type="RefSeq" id="XP_036011081.1">
    <property type="nucleotide sequence ID" value="XM_036155188.1"/>
</dbReference>
<dbReference type="SMR" id="Q8BZB2"/>
<dbReference type="BioGRID" id="211734">
    <property type="interactions" value="3"/>
</dbReference>
<dbReference type="FunCoup" id="Q8BZB2">
    <property type="interactions" value="567"/>
</dbReference>
<dbReference type="STRING" id="10090.ENSMUSP00000082856"/>
<dbReference type="iPTMnet" id="Q8BZB2"/>
<dbReference type="PhosphoSitePlus" id="Q8BZB2"/>
<dbReference type="SwissPalm" id="Q8BZB2"/>
<dbReference type="PaxDb" id="10090-ENSMUSP00000082856"/>
<dbReference type="PeptideAtlas" id="Q8BZB2"/>
<dbReference type="ProteomicsDB" id="285234"/>
<dbReference type="Pumba" id="Q8BZB2"/>
<dbReference type="Antibodypedia" id="14730">
    <property type="antibodies" value="107 antibodies from 18 providers"/>
</dbReference>
<dbReference type="Ensembl" id="ENSMUST00000085709.6">
    <property type="protein sequence ID" value="ENSMUSP00000082856.5"/>
    <property type="gene ID" value="ENSMUSG00000063849.7"/>
</dbReference>
<dbReference type="GeneID" id="66812"/>
<dbReference type="KEGG" id="mmu:66812"/>
<dbReference type="UCSC" id="uc009put.1">
    <property type="organism name" value="mouse"/>
</dbReference>
<dbReference type="AGR" id="MGI:1914062"/>
<dbReference type="CTD" id="60490"/>
<dbReference type="MGI" id="MGI:1914062">
    <property type="gene designation" value="Ppcdc"/>
</dbReference>
<dbReference type="VEuPathDB" id="HostDB:ENSMUSG00000063849"/>
<dbReference type="eggNOG" id="KOG0672">
    <property type="taxonomic scope" value="Eukaryota"/>
</dbReference>
<dbReference type="GeneTree" id="ENSGT00440000038107"/>
<dbReference type="HOGENOM" id="CLU_033319_3_2_1"/>
<dbReference type="InParanoid" id="Q8BZB2"/>
<dbReference type="OMA" id="KGLACGD"/>
<dbReference type="OrthoDB" id="1532798at2759"/>
<dbReference type="PhylomeDB" id="Q8BZB2"/>
<dbReference type="TreeFam" id="TF315740"/>
<dbReference type="BioCyc" id="MOUSE:MONOMER3DJ-561"/>
<dbReference type="Reactome" id="R-MMU-196783">
    <property type="pathway name" value="Coenzyme A biosynthesis"/>
</dbReference>
<dbReference type="UniPathway" id="UPA00241">
    <property type="reaction ID" value="UER00354"/>
</dbReference>
<dbReference type="BioGRID-ORCS" id="66812">
    <property type="hits" value="18 hits in 80 CRISPR screens"/>
</dbReference>
<dbReference type="ChiTaRS" id="Ppcdc">
    <property type="organism name" value="mouse"/>
</dbReference>
<dbReference type="PRO" id="PR:Q8BZB2"/>
<dbReference type="Proteomes" id="UP000000589">
    <property type="component" value="Chromosome 9"/>
</dbReference>
<dbReference type="RNAct" id="Q8BZB2">
    <property type="molecule type" value="protein"/>
</dbReference>
<dbReference type="Bgee" id="ENSMUSG00000063849">
    <property type="expression patterns" value="Expressed in granulocyte and 230 other cell types or tissues"/>
</dbReference>
<dbReference type="ExpressionAtlas" id="Q8BZB2">
    <property type="expression patterns" value="baseline and differential"/>
</dbReference>
<dbReference type="GO" id="GO:0010181">
    <property type="term" value="F:FMN binding"/>
    <property type="evidence" value="ECO:0000250"/>
    <property type="project" value="UniProtKB"/>
</dbReference>
<dbReference type="GO" id="GO:0042802">
    <property type="term" value="F:identical protein binding"/>
    <property type="evidence" value="ECO:0000250"/>
    <property type="project" value="UniProtKB"/>
</dbReference>
<dbReference type="GO" id="GO:0004633">
    <property type="term" value="F:phosphopantothenoylcysteine decarboxylase activity"/>
    <property type="evidence" value="ECO:0000250"/>
    <property type="project" value="UniProtKB"/>
</dbReference>
<dbReference type="GO" id="GO:0015937">
    <property type="term" value="P:coenzyme A biosynthetic process"/>
    <property type="evidence" value="ECO:0000266"/>
    <property type="project" value="MGI"/>
</dbReference>
<dbReference type="FunFam" id="3.40.50.1950:FF:000004">
    <property type="entry name" value="Phosphopantothenoylcysteine decarboxylase"/>
    <property type="match status" value="1"/>
</dbReference>
<dbReference type="Gene3D" id="3.40.50.1950">
    <property type="entry name" value="Flavin prenyltransferase-like"/>
    <property type="match status" value="1"/>
</dbReference>
<dbReference type="InterPro" id="IPR036551">
    <property type="entry name" value="Flavin_trans-like"/>
</dbReference>
<dbReference type="InterPro" id="IPR003382">
    <property type="entry name" value="Flavoprotein"/>
</dbReference>
<dbReference type="PANTHER" id="PTHR14359">
    <property type="entry name" value="HOMO-OLIGOMERIC FLAVIN CONTAINING CYS DECARBOXYLASE FAMILY"/>
    <property type="match status" value="1"/>
</dbReference>
<dbReference type="PANTHER" id="PTHR14359:SF6">
    <property type="entry name" value="PHOSPHOPANTOTHENOYLCYSTEINE DECARBOXYLASE"/>
    <property type="match status" value="1"/>
</dbReference>
<dbReference type="Pfam" id="PF02441">
    <property type="entry name" value="Flavoprotein"/>
    <property type="match status" value="1"/>
</dbReference>
<dbReference type="SUPFAM" id="SSF52507">
    <property type="entry name" value="Homo-oligomeric flavin-containing Cys decarboxylases, HFCD"/>
    <property type="match status" value="1"/>
</dbReference>
<sequence>MEPKAPCPAAVPSEERKFRVLVGVTGSVAALKLPLLVSKLLDVPGLEVTVVTTERAKHFYSPQDVPVTLYSDADEWEMWKRRSDPVLHIDLRRWADLMLVAPLDANTLGKVASGICDNLLTCVIRAWDLNKPLLFCPAMNTAMWEHPLTAQQVAQLKAFGYVEIPCVSKKLVCGDQGLGAMAEVETIVAKVQAVLSQHGSIQQS</sequence>
<feature type="chain" id="PRO_0000182031" description="Phosphopantothenoylcysteine decarboxylase">
    <location>
        <begin position="1"/>
        <end position="204"/>
    </location>
</feature>
<feature type="active site" description="Proton donor" evidence="2">
    <location>
        <position position="173"/>
    </location>
</feature>
<feature type="binding site" evidence="2">
    <location>
        <position position="53"/>
    </location>
    <ligand>
        <name>FMN</name>
        <dbReference type="ChEBI" id="CHEBI:58210"/>
    </ligand>
</feature>
<feature type="binding site" evidence="2">
    <location>
        <begin position="104"/>
        <end position="107"/>
    </location>
    <ligand>
        <name>FMN</name>
        <dbReference type="ChEBI" id="CHEBI:58210"/>
    </ligand>
</feature>
<feature type="binding site" evidence="1">
    <location>
        <position position="140"/>
    </location>
    <ligand>
        <name>substrate</name>
    </ligand>
</feature>
<reference key="1">
    <citation type="journal article" date="2005" name="Science">
        <title>The transcriptional landscape of the mammalian genome.</title>
        <authorList>
            <person name="Carninci P."/>
            <person name="Kasukawa T."/>
            <person name="Katayama S."/>
            <person name="Gough J."/>
            <person name="Frith M.C."/>
            <person name="Maeda N."/>
            <person name="Oyama R."/>
            <person name="Ravasi T."/>
            <person name="Lenhard B."/>
            <person name="Wells C."/>
            <person name="Kodzius R."/>
            <person name="Shimokawa K."/>
            <person name="Bajic V.B."/>
            <person name="Brenner S.E."/>
            <person name="Batalov S."/>
            <person name="Forrest A.R."/>
            <person name="Zavolan M."/>
            <person name="Davis M.J."/>
            <person name="Wilming L.G."/>
            <person name="Aidinis V."/>
            <person name="Allen J.E."/>
            <person name="Ambesi-Impiombato A."/>
            <person name="Apweiler R."/>
            <person name="Aturaliya R.N."/>
            <person name="Bailey T.L."/>
            <person name="Bansal M."/>
            <person name="Baxter L."/>
            <person name="Beisel K.W."/>
            <person name="Bersano T."/>
            <person name="Bono H."/>
            <person name="Chalk A.M."/>
            <person name="Chiu K.P."/>
            <person name="Choudhary V."/>
            <person name="Christoffels A."/>
            <person name="Clutterbuck D.R."/>
            <person name="Crowe M.L."/>
            <person name="Dalla E."/>
            <person name="Dalrymple B.P."/>
            <person name="de Bono B."/>
            <person name="Della Gatta G."/>
            <person name="di Bernardo D."/>
            <person name="Down T."/>
            <person name="Engstrom P."/>
            <person name="Fagiolini M."/>
            <person name="Faulkner G."/>
            <person name="Fletcher C.F."/>
            <person name="Fukushima T."/>
            <person name="Furuno M."/>
            <person name="Futaki S."/>
            <person name="Gariboldi M."/>
            <person name="Georgii-Hemming P."/>
            <person name="Gingeras T.R."/>
            <person name="Gojobori T."/>
            <person name="Green R.E."/>
            <person name="Gustincich S."/>
            <person name="Harbers M."/>
            <person name="Hayashi Y."/>
            <person name="Hensch T.K."/>
            <person name="Hirokawa N."/>
            <person name="Hill D."/>
            <person name="Huminiecki L."/>
            <person name="Iacono M."/>
            <person name="Ikeo K."/>
            <person name="Iwama A."/>
            <person name="Ishikawa T."/>
            <person name="Jakt M."/>
            <person name="Kanapin A."/>
            <person name="Katoh M."/>
            <person name="Kawasawa Y."/>
            <person name="Kelso J."/>
            <person name="Kitamura H."/>
            <person name="Kitano H."/>
            <person name="Kollias G."/>
            <person name="Krishnan S.P."/>
            <person name="Kruger A."/>
            <person name="Kummerfeld S.K."/>
            <person name="Kurochkin I.V."/>
            <person name="Lareau L.F."/>
            <person name="Lazarevic D."/>
            <person name="Lipovich L."/>
            <person name="Liu J."/>
            <person name="Liuni S."/>
            <person name="McWilliam S."/>
            <person name="Madan Babu M."/>
            <person name="Madera M."/>
            <person name="Marchionni L."/>
            <person name="Matsuda H."/>
            <person name="Matsuzawa S."/>
            <person name="Miki H."/>
            <person name="Mignone F."/>
            <person name="Miyake S."/>
            <person name="Morris K."/>
            <person name="Mottagui-Tabar S."/>
            <person name="Mulder N."/>
            <person name="Nakano N."/>
            <person name="Nakauchi H."/>
            <person name="Ng P."/>
            <person name="Nilsson R."/>
            <person name="Nishiguchi S."/>
            <person name="Nishikawa S."/>
            <person name="Nori F."/>
            <person name="Ohara O."/>
            <person name="Okazaki Y."/>
            <person name="Orlando V."/>
            <person name="Pang K.C."/>
            <person name="Pavan W.J."/>
            <person name="Pavesi G."/>
            <person name="Pesole G."/>
            <person name="Petrovsky N."/>
            <person name="Piazza S."/>
            <person name="Reed J."/>
            <person name="Reid J.F."/>
            <person name="Ring B.Z."/>
            <person name="Ringwald M."/>
            <person name="Rost B."/>
            <person name="Ruan Y."/>
            <person name="Salzberg S.L."/>
            <person name="Sandelin A."/>
            <person name="Schneider C."/>
            <person name="Schoenbach C."/>
            <person name="Sekiguchi K."/>
            <person name="Semple C.A."/>
            <person name="Seno S."/>
            <person name="Sessa L."/>
            <person name="Sheng Y."/>
            <person name="Shibata Y."/>
            <person name="Shimada H."/>
            <person name="Shimada K."/>
            <person name="Silva D."/>
            <person name="Sinclair B."/>
            <person name="Sperling S."/>
            <person name="Stupka E."/>
            <person name="Sugiura K."/>
            <person name="Sultana R."/>
            <person name="Takenaka Y."/>
            <person name="Taki K."/>
            <person name="Tammoja K."/>
            <person name="Tan S.L."/>
            <person name="Tang S."/>
            <person name="Taylor M.S."/>
            <person name="Tegner J."/>
            <person name="Teichmann S.A."/>
            <person name="Ueda H.R."/>
            <person name="van Nimwegen E."/>
            <person name="Verardo R."/>
            <person name="Wei C.L."/>
            <person name="Yagi K."/>
            <person name="Yamanishi H."/>
            <person name="Zabarovsky E."/>
            <person name="Zhu S."/>
            <person name="Zimmer A."/>
            <person name="Hide W."/>
            <person name="Bult C."/>
            <person name="Grimmond S.M."/>
            <person name="Teasdale R.D."/>
            <person name="Liu E.T."/>
            <person name="Brusic V."/>
            <person name="Quackenbush J."/>
            <person name="Wahlestedt C."/>
            <person name="Mattick J.S."/>
            <person name="Hume D.A."/>
            <person name="Kai C."/>
            <person name="Sasaki D."/>
            <person name="Tomaru Y."/>
            <person name="Fukuda S."/>
            <person name="Kanamori-Katayama M."/>
            <person name="Suzuki M."/>
            <person name="Aoki J."/>
            <person name="Arakawa T."/>
            <person name="Iida J."/>
            <person name="Imamura K."/>
            <person name="Itoh M."/>
            <person name="Kato T."/>
            <person name="Kawaji H."/>
            <person name="Kawagashira N."/>
            <person name="Kawashima T."/>
            <person name="Kojima M."/>
            <person name="Kondo S."/>
            <person name="Konno H."/>
            <person name="Nakano K."/>
            <person name="Ninomiya N."/>
            <person name="Nishio T."/>
            <person name="Okada M."/>
            <person name="Plessy C."/>
            <person name="Shibata K."/>
            <person name="Shiraki T."/>
            <person name="Suzuki S."/>
            <person name="Tagami M."/>
            <person name="Waki K."/>
            <person name="Watahiki A."/>
            <person name="Okamura-Oho Y."/>
            <person name="Suzuki H."/>
            <person name="Kawai J."/>
            <person name="Hayashizaki Y."/>
        </authorList>
    </citation>
    <scope>NUCLEOTIDE SEQUENCE [LARGE SCALE MRNA]</scope>
    <source>
        <strain>C57BL/6J</strain>
        <tissue>Cerebellum</tissue>
    </source>
</reference>
<reference key="2">
    <citation type="journal article" date="2004" name="Genome Res.">
        <title>The status, quality, and expansion of the NIH full-length cDNA project: the Mammalian Gene Collection (MGC).</title>
        <authorList>
            <consortium name="The MGC Project Team"/>
        </authorList>
    </citation>
    <scope>NUCLEOTIDE SEQUENCE [LARGE SCALE MRNA]</scope>
    <source>
        <strain>C57BL/6J</strain>
        <strain>Czech II</strain>
        <tissue>Eye</tissue>
        <tissue>Lung</tissue>
    </source>
</reference>
<reference key="3">
    <citation type="journal article" date="2010" name="Cell">
        <title>A tissue-specific atlas of mouse protein phosphorylation and expression.</title>
        <authorList>
            <person name="Huttlin E.L."/>
            <person name="Jedrychowski M.P."/>
            <person name="Elias J.E."/>
            <person name="Goswami T."/>
            <person name="Rad R."/>
            <person name="Beausoleil S.A."/>
            <person name="Villen J."/>
            <person name="Haas W."/>
            <person name="Sowa M.E."/>
            <person name="Gygi S.P."/>
        </authorList>
    </citation>
    <scope>IDENTIFICATION BY MASS SPECTROMETRY [LARGE SCALE ANALYSIS]</scope>
    <source>
        <tissue>Brain</tissue>
        <tissue>Kidney</tissue>
        <tissue>Lung</tissue>
    </source>
</reference>
<gene>
    <name type="primary">Ppcdc</name>
    <name type="synonym">Coac</name>
</gene>
<organism>
    <name type="scientific">Mus musculus</name>
    <name type="common">Mouse</name>
    <dbReference type="NCBI Taxonomy" id="10090"/>
    <lineage>
        <taxon>Eukaryota</taxon>
        <taxon>Metazoa</taxon>
        <taxon>Chordata</taxon>
        <taxon>Craniata</taxon>
        <taxon>Vertebrata</taxon>
        <taxon>Euteleostomi</taxon>
        <taxon>Mammalia</taxon>
        <taxon>Eutheria</taxon>
        <taxon>Euarchontoglires</taxon>
        <taxon>Glires</taxon>
        <taxon>Rodentia</taxon>
        <taxon>Myomorpha</taxon>
        <taxon>Muroidea</taxon>
        <taxon>Muridae</taxon>
        <taxon>Murinae</taxon>
        <taxon>Mus</taxon>
        <taxon>Mus</taxon>
    </lineage>
</organism>
<proteinExistence type="evidence at protein level"/>
<accession>Q8BZB2</accession>
<keyword id="KW-0173">Coenzyme A biosynthesis</keyword>
<keyword id="KW-0210">Decarboxylase</keyword>
<keyword id="KW-0285">Flavoprotein</keyword>
<keyword id="KW-0288">FMN</keyword>
<keyword id="KW-0456">Lyase</keyword>
<keyword id="KW-1185">Reference proteome</keyword>
<protein>
    <recommendedName>
        <fullName>Phosphopantothenoylcysteine decarboxylase</fullName>
        <shortName>PPC-DC</shortName>
        <ecNumber evidence="2">4.1.1.36</ecNumber>
    </recommendedName>
    <alternativeName>
        <fullName>CoaC</fullName>
    </alternativeName>
</protein>
<comment type="function">
    <text evidence="2">Catalyzes the decarboxylation of the cysteine moiety of 4-phosphopantothenoylcysteine to form 4'-phosphopantotheine and this reaction forms part of the biosynthesis of coenzyme A.</text>
</comment>
<comment type="catalytic activity">
    <reaction evidence="2">
        <text>N-[(R)-4-phosphopantothenoyl]-L-cysteine + H(+) = (R)-4'-phosphopantetheine + CO2</text>
        <dbReference type="Rhea" id="RHEA:16793"/>
        <dbReference type="ChEBI" id="CHEBI:15378"/>
        <dbReference type="ChEBI" id="CHEBI:16526"/>
        <dbReference type="ChEBI" id="CHEBI:59458"/>
        <dbReference type="ChEBI" id="CHEBI:61723"/>
        <dbReference type="EC" id="4.1.1.36"/>
    </reaction>
    <physiologicalReaction direction="left-to-right" evidence="2">
        <dbReference type="Rhea" id="RHEA:16794"/>
    </physiologicalReaction>
</comment>
<comment type="cofactor">
    <cofactor evidence="2">
        <name>FMN</name>
        <dbReference type="ChEBI" id="CHEBI:58210"/>
    </cofactor>
    <text evidence="2">Binds 1 FMN per subunit.</text>
</comment>
<comment type="pathway">
    <text evidence="2">Cofactor biosynthesis; coenzyme A biosynthesis; CoA from (R)-pantothenate: step 3/5.</text>
</comment>
<comment type="subunit">
    <text evidence="2">Homotrimer.</text>
</comment>
<comment type="similarity">
    <text evidence="3">Belongs to the HFCD (homooligomeric flavin containing Cys decarboxylase) superfamily.</text>
</comment>
<name>COAC_MOUSE</name>
<evidence type="ECO:0000250" key="1"/>
<evidence type="ECO:0000250" key="2">
    <source>
        <dbReference type="UniProtKB" id="Q96CD2"/>
    </source>
</evidence>
<evidence type="ECO:0000305" key="3"/>